<name>PQQA_BRADU</name>
<protein>
    <recommendedName>
        <fullName>Coenzyme PQQ synthesis protein A</fullName>
    </recommendedName>
    <alternativeName>
        <fullName>Pyrroloquinoline quinone biosynthesis protein A</fullName>
    </alternativeName>
</protein>
<sequence length="26" mass="2954">MAWKAPKIVEVPCGMEINMYVSATRK</sequence>
<accession>Q89FG5</accession>
<keyword id="KW-0884">PQQ biosynthesis</keyword>
<keyword id="KW-1185">Reference proteome</keyword>
<proteinExistence type="inferred from homology"/>
<comment type="function">
    <text evidence="1">Required for coenzyme pyrroloquinoline quinone (PQQ) biosynthesis. PQQ is probably formed by cross-linking a specific glutamate to a specific tyrosine residue and excising these residues from the peptide (By similarity).</text>
</comment>
<comment type="pathway">
    <text>Cofactor biosynthesis; pyrroloquinoline quinone biosynthesis.</text>
</comment>
<comment type="similarity">
    <text evidence="2">Belongs to the PqqA family.</text>
</comment>
<comment type="sequence caution" evidence="2">
    <conflict type="erroneous initiation">
        <sequence resource="EMBL-CDS" id="BAC52000"/>
    </conflict>
    <text>Extended N-terminus.</text>
</comment>
<dbReference type="EMBL" id="BA000040">
    <property type="protein sequence ID" value="BAC52000.1"/>
    <property type="status" value="ALT_INIT"/>
    <property type="molecule type" value="Genomic_DNA"/>
</dbReference>
<dbReference type="RefSeq" id="NP_773375.1">
    <property type="nucleotide sequence ID" value="NC_004463.1"/>
</dbReference>
<dbReference type="RefSeq" id="WP_007595659.1">
    <property type="nucleotide sequence ID" value="NZ_CP011360.1"/>
</dbReference>
<dbReference type="STRING" id="224911.AAV28_31270"/>
<dbReference type="EnsemblBacteria" id="BAC52000">
    <property type="protein sequence ID" value="BAC52000"/>
    <property type="gene ID" value="BAC52000"/>
</dbReference>
<dbReference type="GeneID" id="93213086"/>
<dbReference type="KEGG" id="bja:bsr6735"/>
<dbReference type="PATRIC" id="fig|224911.44.peg.6756"/>
<dbReference type="eggNOG" id="ENOG5032A34">
    <property type="taxonomic scope" value="Bacteria"/>
</dbReference>
<dbReference type="HOGENOM" id="CLU_219399_2_0_5"/>
<dbReference type="InParanoid" id="Q89FG5"/>
<dbReference type="UniPathway" id="UPA00539"/>
<dbReference type="PRO" id="PR:Q89FG5"/>
<dbReference type="Proteomes" id="UP000002526">
    <property type="component" value="Chromosome"/>
</dbReference>
<dbReference type="GO" id="GO:0018189">
    <property type="term" value="P:pyrroloquinoline quinone biosynthetic process"/>
    <property type="evidence" value="ECO:0007669"/>
    <property type="project" value="UniProtKB-UniRule"/>
</dbReference>
<dbReference type="HAMAP" id="MF_00656">
    <property type="entry name" value="PQQ_syn_PqqA"/>
    <property type="match status" value="1"/>
</dbReference>
<dbReference type="InterPro" id="IPR011725">
    <property type="entry name" value="PQQ_synth_PqqA"/>
</dbReference>
<dbReference type="NCBIfam" id="TIGR02107">
    <property type="entry name" value="PQQ_syn_pqqA"/>
    <property type="match status" value="1"/>
</dbReference>
<dbReference type="Pfam" id="PF08042">
    <property type="entry name" value="PqqA"/>
    <property type="match status" value="1"/>
</dbReference>
<reference key="1">
    <citation type="journal article" date="2002" name="DNA Res.">
        <title>Complete genomic sequence of nitrogen-fixing symbiotic bacterium Bradyrhizobium japonicum USDA110.</title>
        <authorList>
            <person name="Kaneko T."/>
            <person name="Nakamura Y."/>
            <person name="Sato S."/>
            <person name="Minamisawa K."/>
            <person name="Uchiumi T."/>
            <person name="Sasamoto S."/>
            <person name="Watanabe A."/>
            <person name="Idesawa K."/>
            <person name="Iriguchi M."/>
            <person name="Kawashima K."/>
            <person name="Kohara M."/>
            <person name="Matsumoto M."/>
            <person name="Shimpo S."/>
            <person name="Tsuruoka H."/>
            <person name="Wada T."/>
            <person name="Yamada M."/>
            <person name="Tabata S."/>
        </authorList>
    </citation>
    <scope>NUCLEOTIDE SEQUENCE [LARGE SCALE GENOMIC DNA]</scope>
    <source>
        <strain>JCM 10833 / BCRC 13528 / IAM 13628 / NBRC 14792 / USDA 110</strain>
    </source>
</reference>
<organism>
    <name type="scientific">Bradyrhizobium diazoefficiens (strain JCM 10833 / BCRC 13528 / IAM 13628 / NBRC 14792 / USDA 110)</name>
    <dbReference type="NCBI Taxonomy" id="224911"/>
    <lineage>
        <taxon>Bacteria</taxon>
        <taxon>Pseudomonadati</taxon>
        <taxon>Pseudomonadota</taxon>
        <taxon>Alphaproteobacteria</taxon>
        <taxon>Hyphomicrobiales</taxon>
        <taxon>Nitrobacteraceae</taxon>
        <taxon>Bradyrhizobium</taxon>
    </lineage>
</organism>
<evidence type="ECO:0000250" key="1"/>
<evidence type="ECO:0000305" key="2"/>
<gene>
    <name type="primary">pqqA</name>
    <name type="ordered locus">bsr6735</name>
</gene>
<feature type="chain" id="PRO_0000220306" description="Coenzyme PQQ synthesis protein A">
    <location>
        <begin position="1"/>
        <end position="26"/>
    </location>
</feature>
<feature type="cross-link" description="Pyrroloquinoline quinone (Glu-Tyr)" evidence="1">
    <location>
        <begin position="16"/>
        <end position="20"/>
    </location>
</feature>